<accession>B2TJ78</accession>
<organism>
    <name type="scientific">Clostridium botulinum (strain Eklund 17B / Type B)</name>
    <dbReference type="NCBI Taxonomy" id="935198"/>
    <lineage>
        <taxon>Bacteria</taxon>
        <taxon>Bacillati</taxon>
        <taxon>Bacillota</taxon>
        <taxon>Clostridia</taxon>
        <taxon>Eubacteriales</taxon>
        <taxon>Clostridiaceae</taxon>
        <taxon>Clostridium</taxon>
    </lineage>
</organism>
<feature type="chain" id="PRO_0000352295" description="5-dehydro-2-deoxygluconokinase">
    <location>
        <begin position="1"/>
        <end position="339"/>
    </location>
</feature>
<comment type="function">
    <text evidence="1">Catalyzes the phosphorylation of 5-dehydro-2-deoxy-D-gluconate (2-deoxy-5-keto-D-gluconate or DKG) to 6-phospho-5-dehydro-2-deoxy-D-gluconate (DKGP).</text>
</comment>
<comment type="catalytic activity">
    <reaction evidence="1">
        <text>5-dehydro-2-deoxy-D-gluconate + ATP = 6-phospho-5-dehydro-2-deoxy-D-gluconate + ADP + H(+)</text>
        <dbReference type="Rhea" id="RHEA:13497"/>
        <dbReference type="ChEBI" id="CHEBI:15378"/>
        <dbReference type="ChEBI" id="CHEBI:16669"/>
        <dbReference type="ChEBI" id="CHEBI:30616"/>
        <dbReference type="ChEBI" id="CHEBI:57949"/>
        <dbReference type="ChEBI" id="CHEBI:456216"/>
        <dbReference type="EC" id="2.7.1.92"/>
    </reaction>
</comment>
<comment type="pathway">
    <text evidence="1">Polyol metabolism; myo-inositol degradation into acetyl-CoA; acetyl-CoA from myo-inositol: step 5/7.</text>
</comment>
<comment type="similarity">
    <text evidence="1">Belongs to the carbohydrate kinase PfkB family.</text>
</comment>
<proteinExistence type="inferred from homology"/>
<reference key="1">
    <citation type="submission" date="2008-04" db="EMBL/GenBank/DDBJ databases">
        <title>Complete sequence of Clostridium botulinum strain Eklund.</title>
        <authorList>
            <person name="Brinkac L.M."/>
            <person name="Brown J.L."/>
            <person name="Bruce D."/>
            <person name="Detter C."/>
            <person name="Munk C."/>
            <person name="Smith L.A."/>
            <person name="Smith T.J."/>
            <person name="Sutton G."/>
            <person name="Brettin T.S."/>
        </authorList>
    </citation>
    <scope>NUCLEOTIDE SEQUENCE [LARGE SCALE GENOMIC DNA]</scope>
    <source>
        <strain>Eklund 17B / Type B</strain>
    </source>
</reference>
<gene>
    <name evidence="1" type="primary">iolC</name>
    <name type="ordered locus">CLL_A1302</name>
</gene>
<name>IOLC_CLOBB</name>
<sequence>MGYIKFQKDRKFEIVPIGRVAIDFNPIDINRPLSESKTFKKYLGGSPANIAVGLSRLGKKVGFIGKVSKDQFGKFVVDYFDNEGIDTSQIKYAENGESLGLTFTEIASPTESSILMYRNGIADLELDVNEIDEEYIKNTKAIVISGTALAKSPSREAALKALELAKKNDTIVIFDVDYREYNWKNKDEIAIYYSIVGKQSDIVMGSREEFDLMESLIVKEKSTDEESAKRWLGFGNKIVVIKHGKEGSTAYTNDRKSYKIKPFPVKLLKSFGGGDAYASAFIYGILEEWDIMDALEFGSASAAMLVASHSCSEDMPTVKEINEFIKEKKEQYGEMIARG</sequence>
<evidence type="ECO:0000255" key="1">
    <source>
        <dbReference type="HAMAP-Rule" id="MF_01668"/>
    </source>
</evidence>
<protein>
    <recommendedName>
        <fullName evidence="1">5-dehydro-2-deoxygluconokinase</fullName>
        <ecNumber evidence="1">2.7.1.92</ecNumber>
    </recommendedName>
    <alternativeName>
        <fullName evidence="1">2-deoxy-5-keto-D-gluconate kinase</fullName>
        <shortName evidence="1">DKG kinase</shortName>
    </alternativeName>
</protein>
<dbReference type="EC" id="2.7.1.92" evidence="1"/>
<dbReference type="EMBL" id="CP001056">
    <property type="protein sequence ID" value="ACD24006.1"/>
    <property type="molecule type" value="Genomic_DNA"/>
</dbReference>
<dbReference type="SMR" id="B2TJ78"/>
<dbReference type="KEGG" id="cbk:CLL_A1302"/>
<dbReference type="PATRIC" id="fig|935198.13.peg.1248"/>
<dbReference type="HOGENOM" id="CLU_027634_6_0_9"/>
<dbReference type="UniPathway" id="UPA00076">
    <property type="reaction ID" value="UER00146"/>
</dbReference>
<dbReference type="Proteomes" id="UP000001195">
    <property type="component" value="Chromosome"/>
</dbReference>
<dbReference type="GO" id="GO:0047590">
    <property type="term" value="F:5-dehydro-2-deoxygluconokinase activity"/>
    <property type="evidence" value="ECO:0007669"/>
    <property type="project" value="UniProtKB-UniRule"/>
</dbReference>
<dbReference type="GO" id="GO:0005524">
    <property type="term" value="F:ATP binding"/>
    <property type="evidence" value="ECO:0007669"/>
    <property type="project" value="UniProtKB-UniRule"/>
</dbReference>
<dbReference type="GO" id="GO:0019310">
    <property type="term" value="P:inositol catabolic process"/>
    <property type="evidence" value="ECO:0007669"/>
    <property type="project" value="UniProtKB-UniRule"/>
</dbReference>
<dbReference type="CDD" id="cd01166">
    <property type="entry name" value="KdgK"/>
    <property type="match status" value="1"/>
</dbReference>
<dbReference type="Gene3D" id="3.40.1190.20">
    <property type="match status" value="1"/>
</dbReference>
<dbReference type="Gene3D" id="2.20.150.10">
    <property type="entry name" value="putative 5-dehydro-2- deoxygluconokinase"/>
    <property type="match status" value="1"/>
</dbReference>
<dbReference type="HAMAP" id="MF_01668">
    <property type="entry name" value="IolC"/>
    <property type="match status" value="1"/>
</dbReference>
<dbReference type="InterPro" id="IPR002173">
    <property type="entry name" value="Carboh/pur_kinase_PfkB_CS"/>
</dbReference>
<dbReference type="InterPro" id="IPR022841">
    <property type="entry name" value="DKG_kinase_firmi"/>
</dbReference>
<dbReference type="InterPro" id="IPR030830">
    <property type="entry name" value="Myo_inos_IolC"/>
</dbReference>
<dbReference type="InterPro" id="IPR023314">
    <property type="entry name" value="Myo_inos_IolC-like_sf"/>
</dbReference>
<dbReference type="InterPro" id="IPR050306">
    <property type="entry name" value="PfkB_Carbo_kinase"/>
</dbReference>
<dbReference type="InterPro" id="IPR011611">
    <property type="entry name" value="PfkB_dom"/>
</dbReference>
<dbReference type="InterPro" id="IPR029056">
    <property type="entry name" value="Ribokinase-like"/>
</dbReference>
<dbReference type="NCBIfam" id="TIGR04382">
    <property type="entry name" value="myo_inos_iolC_N"/>
    <property type="match status" value="1"/>
</dbReference>
<dbReference type="PANTHER" id="PTHR43085:SF49">
    <property type="entry name" value="5-DEHYDRO-2-DEOXYGLUCONOKINASE"/>
    <property type="match status" value="1"/>
</dbReference>
<dbReference type="PANTHER" id="PTHR43085">
    <property type="entry name" value="HEXOKINASE FAMILY MEMBER"/>
    <property type="match status" value="1"/>
</dbReference>
<dbReference type="Pfam" id="PF00294">
    <property type="entry name" value="PfkB"/>
    <property type="match status" value="1"/>
</dbReference>
<dbReference type="SUPFAM" id="SSF53613">
    <property type="entry name" value="Ribokinase-like"/>
    <property type="match status" value="1"/>
</dbReference>
<dbReference type="PROSITE" id="PS00584">
    <property type="entry name" value="PFKB_KINASES_2"/>
    <property type="match status" value="1"/>
</dbReference>
<keyword id="KW-0067">ATP-binding</keyword>
<keyword id="KW-0418">Kinase</keyword>
<keyword id="KW-0547">Nucleotide-binding</keyword>
<keyword id="KW-0808">Transferase</keyword>